<dbReference type="EMBL" id="BA000035">
    <property type="protein sequence ID" value="BAC18699.1"/>
    <property type="status" value="ALT_INIT"/>
    <property type="molecule type" value="Genomic_DNA"/>
</dbReference>
<dbReference type="RefSeq" id="WP_006767890.1">
    <property type="nucleotide sequence ID" value="NC_004369.1"/>
</dbReference>
<dbReference type="SMR" id="Q8FP96"/>
<dbReference type="STRING" id="196164.gene:10742317"/>
<dbReference type="KEGG" id="cef:CE1889"/>
<dbReference type="eggNOG" id="COG3022">
    <property type="taxonomic scope" value="Bacteria"/>
</dbReference>
<dbReference type="HOGENOM" id="CLU_071581_0_0_11"/>
<dbReference type="OrthoDB" id="3210767at2"/>
<dbReference type="Proteomes" id="UP000001409">
    <property type="component" value="Chromosome"/>
</dbReference>
<dbReference type="GO" id="GO:0005829">
    <property type="term" value="C:cytosol"/>
    <property type="evidence" value="ECO:0007669"/>
    <property type="project" value="TreeGrafter"/>
</dbReference>
<dbReference type="GO" id="GO:0033194">
    <property type="term" value="P:response to hydroperoxide"/>
    <property type="evidence" value="ECO:0007669"/>
    <property type="project" value="TreeGrafter"/>
</dbReference>
<dbReference type="HAMAP" id="MF_00652">
    <property type="entry name" value="UPF0246"/>
    <property type="match status" value="1"/>
</dbReference>
<dbReference type="InterPro" id="IPR005583">
    <property type="entry name" value="YaaA"/>
</dbReference>
<dbReference type="NCBIfam" id="NF002546">
    <property type="entry name" value="PRK02101.2-4"/>
    <property type="match status" value="1"/>
</dbReference>
<dbReference type="PANTHER" id="PTHR30283:SF4">
    <property type="entry name" value="PEROXIDE STRESS RESISTANCE PROTEIN YAAA"/>
    <property type="match status" value="1"/>
</dbReference>
<dbReference type="PANTHER" id="PTHR30283">
    <property type="entry name" value="PEROXIDE STRESS RESPONSE PROTEIN YAAA"/>
    <property type="match status" value="1"/>
</dbReference>
<dbReference type="Pfam" id="PF03883">
    <property type="entry name" value="H2O2_YaaD"/>
    <property type="match status" value="1"/>
</dbReference>
<sequence length="245" mass="25594">MLILLPPSETKTPGGAGAPLDLPSLSFPELTDVRESIITDLGALSPDDALPVLGISEKLRPEAVANTVLRSAPTMPAVLRYSGVLYDALAADTLTPAALNRLAIGSALFGVVRAGDHIPHYRLSGGTKLPGAQGTTPTMKARWGTTITDALAGVDELIIDLRSGTYQQLGKVPGAVTVRVESVLGDGTRKVVSHFNKHYKGELARVLATSPREATTAGEVADIARGAGMTVEINEGRKETLTLVV</sequence>
<comment type="similarity">
    <text evidence="2">Belongs to the UPF0246 family.</text>
</comment>
<comment type="sequence caution" evidence="2">
    <conflict type="erroneous initiation">
        <sequence resource="EMBL-CDS" id="BAC18699"/>
    </conflict>
</comment>
<reference key="1">
    <citation type="journal article" date="2003" name="Genome Res.">
        <title>Comparative complete genome sequence analysis of the amino acid replacements responsible for the thermostability of Corynebacterium efficiens.</title>
        <authorList>
            <person name="Nishio Y."/>
            <person name="Nakamura Y."/>
            <person name="Kawarabayasi Y."/>
            <person name="Usuda Y."/>
            <person name="Kimura E."/>
            <person name="Sugimoto S."/>
            <person name="Matsui K."/>
            <person name="Yamagishi A."/>
            <person name="Kikuchi H."/>
            <person name="Ikeo K."/>
            <person name="Gojobori T."/>
        </authorList>
    </citation>
    <scope>NUCLEOTIDE SEQUENCE [LARGE SCALE GENOMIC DNA]</scope>
    <source>
        <strain>DSM 44549 / YS-314 / AJ 12310 / JCM 11189 / NBRC 100395</strain>
    </source>
</reference>
<gene>
    <name type="ordered locus">CE1889</name>
</gene>
<protein>
    <recommendedName>
        <fullName>UPF0246 protein CE1889</fullName>
    </recommendedName>
</protein>
<name>Y1889_COREF</name>
<feature type="chain" id="PRO_0000203981" description="UPF0246 protein CE1889">
    <location>
        <begin position="1"/>
        <end position="245"/>
    </location>
</feature>
<feature type="region of interest" description="Disordered" evidence="1">
    <location>
        <begin position="1"/>
        <end position="20"/>
    </location>
</feature>
<organism>
    <name type="scientific">Corynebacterium efficiens (strain DSM 44549 / YS-314 / AJ 12310 / JCM 11189 / NBRC 100395)</name>
    <dbReference type="NCBI Taxonomy" id="196164"/>
    <lineage>
        <taxon>Bacteria</taxon>
        <taxon>Bacillati</taxon>
        <taxon>Actinomycetota</taxon>
        <taxon>Actinomycetes</taxon>
        <taxon>Mycobacteriales</taxon>
        <taxon>Corynebacteriaceae</taxon>
        <taxon>Corynebacterium</taxon>
    </lineage>
</organism>
<keyword id="KW-1185">Reference proteome</keyword>
<evidence type="ECO:0000256" key="1">
    <source>
        <dbReference type="SAM" id="MobiDB-lite"/>
    </source>
</evidence>
<evidence type="ECO:0000305" key="2"/>
<accession>Q8FP96</accession>
<proteinExistence type="inferred from homology"/>